<comment type="function">
    <text evidence="2">Photosystem II (PSII) is a light-driven water:plastoquinone oxidoreductase that uses light energy to abstract electrons from H(2)O, generating O(2) and a proton gradient subsequently used for ATP formation. It consists of a core antenna complex that captures photons, and an electron transfer chain that converts photonic excitation into a charge separation. The D1/D2 (PsbA/PsbD) reaction center heterodimer binds P680, the primary electron donor of PSII as well as several subsequent electron acceptors. D2 is needed for assembly of a stable PSII complex.</text>
</comment>
<comment type="catalytic activity">
    <reaction evidence="2">
        <text>2 a plastoquinone + 4 hnu + 2 H2O = 2 a plastoquinol + O2</text>
        <dbReference type="Rhea" id="RHEA:36359"/>
        <dbReference type="Rhea" id="RHEA-COMP:9561"/>
        <dbReference type="Rhea" id="RHEA-COMP:9562"/>
        <dbReference type="ChEBI" id="CHEBI:15377"/>
        <dbReference type="ChEBI" id="CHEBI:15379"/>
        <dbReference type="ChEBI" id="CHEBI:17757"/>
        <dbReference type="ChEBI" id="CHEBI:30212"/>
        <dbReference type="ChEBI" id="CHEBI:62192"/>
        <dbReference type="EC" id="1.10.3.9"/>
    </reaction>
</comment>
<comment type="cofactor">
    <text evidence="2">The D1/D2 heterodimer binds P680, chlorophylls that are the primary electron donor of PSII, and subsequent electron acceptors. It shares a non-heme iron and each subunit binds pheophytin, quinone, additional chlorophylls, carotenoids and lipids. There is also a Cl(-1) ion associated with D1 and D2, which is required for oxygen evolution. The PSII complex binds additional chlorophylls, carotenoids and specific lipids.</text>
</comment>
<comment type="subunit">
    <text evidence="2">PSII is composed of 1 copy each of membrane proteins PsbA, PsbB, PsbC, PsbD, PsbE, PsbF, PsbH, PsbI, PsbJ, PsbK, PsbL, PsbM, PsbT, PsbX, PsbY, PsbZ, Psb30/Ycf12, at least 3 peripheral proteins of the oxygen-evolving complex and a large number of cofactors. It forms dimeric complexes.</text>
</comment>
<comment type="subcellular location">
    <subcellularLocation>
        <location evidence="2">Plastid</location>
        <location evidence="2">Chloroplast thylakoid membrane</location>
        <topology evidence="2">Multi-pass membrane protein</topology>
    </subcellularLocation>
</comment>
<comment type="miscellaneous">
    <text evidence="2">2 of the reaction center chlorophylls (ChlD1 and ChlD2) are entirely coordinated by water.</text>
</comment>
<comment type="similarity">
    <text evidence="2">Belongs to the reaction center PufL/M/PsbA/D family.</text>
</comment>
<accession>A8SE98</accession>
<geneLocation type="chloroplast"/>
<dbReference type="EC" id="1.10.3.9" evidence="2"/>
<dbReference type="EMBL" id="EF614270">
    <property type="protein sequence ID" value="ABQ81445.1"/>
    <property type="molecule type" value="Genomic_DNA"/>
</dbReference>
<dbReference type="RefSeq" id="YP_001542442.1">
    <property type="nucleotide sequence ID" value="NC_009962.1"/>
</dbReference>
<dbReference type="SMR" id="A8SE98"/>
<dbReference type="GeneID" id="5729378"/>
<dbReference type="GO" id="GO:0009535">
    <property type="term" value="C:chloroplast thylakoid membrane"/>
    <property type="evidence" value="ECO:0007669"/>
    <property type="project" value="UniProtKB-SubCell"/>
</dbReference>
<dbReference type="GO" id="GO:0009523">
    <property type="term" value="C:photosystem II"/>
    <property type="evidence" value="ECO:0007669"/>
    <property type="project" value="UniProtKB-KW"/>
</dbReference>
<dbReference type="GO" id="GO:0016168">
    <property type="term" value="F:chlorophyll binding"/>
    <property type="evidence" value="ECO:0007669"/>
    <property type="project" value="UniProtKB-UniRule"/>
</dbReference>
<dbReference type="GO" id="GO:0045156">
    <property type="term" value="F:electron transporter, transferring electrons within the cyclic electron transport pathway of photosynthesis activity"/>
    <property type="evidence" value="ECO:0007669"/>
    <property type="project" value="InterPro"/>
</dbReference>
<dbReference type="GO" id="GO:0005506">
    <property type="term" value="F:iron ion binding"/>
    <property type="evidence" value="ECO:0007669"/>
    <property type="project" value="UniProtKB-UniRule"/>
</dbReference>
<dbReference type="GO" id="GO:0010242">
    <property type="term" value="F:oxygen evolving activity"/>
    <property type="evidence" value="ECO:0007669"/>
    <property type="project" value="UniProtKB-EC"/>
</dbReference>
<dbReference type="GO" id="GO:0009772">
    <property type="term" value="P:photosynthetic electron transport in photosystem II"/>
    <property type="evidence" value="ECO:0007669"/>
    <property type="project" value="InterPro"/>
</dbReference>
<dbReference type="CDD" id="cd09288">
    <property type="entry name" value="Photosystem-II_D2"/>
    <property type="match status" value="1"/>
</dbReference>
<dbReference type="FunFam" id="1.20.85.10:FF:000001">
    <property type="entry name" value="photosystem II D2 protein-like"/>
    <property type="match status" value="1"/>
</dbReference>
<dbReference type="Gene3D" id="1.20.85.10">
    <property type="entry name" value="Photosystem II protein D1-like"/>
    <property type="match status" value="1"/>
</dbReference>
<dbReference type="HAMAP" id="MF_01383">
    <property type="entry name" value="PSII_PsbD_D2"/>
    <property type="match status" value="1"/>
</dbReference>
<dbReference type="InterPro" id="IPR055266">
    <property type="entry name" value="D1/D2"/>
</dbReference>
<dbReference type="InterPro" id="IPR036854">
    <property type="entry name" value="Photo_II_D1/D2_sf"/>
</dbReference>
<dbReference type="InterPro" id="IPR000484">
    <property type="entry name" value="Photo_RC_L/M"/>
</dbReference>
<dbReference type="InterPro" id="IPR055265">
    <property type="entry name" value="Photo_RC_L/M_CS"/>
</dbReference>
<dbReference type="InterPro" id="IPR005868">
    <property type="entry name" value="PSII_PsbD/D2"/>
</dbReference>
<dbReference type="NCBIfam" id="TIGR01152">
    <property type="entry name" value="psbD"/>
    <property type="match status" value="1"/>
</dbReference>
<dbReference type="PANTHER" id="PTHR33149:SF12">
    <property type="entry name" value="PHOTOSYSTEM II D2 PROTEIN"/>
    <property type="match status" value="1"/>
</dbReference>
<dbReference type="PANTHER" id="PTHR33149">
    <property type="entry name" value="PHOTOSYSTEM II PROTEIN D1"/>
    <property type="match status" value="1"/>
</dbReference>
<dbReference type="Pfam" id="PF00124">
    <property type="entry name" value="Photo_RC"/>
    <property type="match status" value="1"/>
</dbReference>
<dbReference type="PRINTS" id="PR00256">
    <property type="entry name" value="REACTNCENTRE"/>
</dbReference>
<dbReference type="SUPFAM" id="SSF81483">
    <property type="entry name" value="Bacterial photosystem II reaction centre, L and M subunits"/>
    <property type="match status" value="1"/>
</dbReference>
<dbReference type="PROSITE" id="PS00244">
    <property type="entry name" value="REACTION_CENTER"/>
    <property type="match status" value="1"/>
</dbReference>
<name>PSBD_CERDE</name>
<reference key="1">
    <citation type="journal article" date="2007" name="Proc. Natl. Acad. Sci. U.S.A.">
        <title>Using plastid genome-scale data to resolve enigmatic relationships among basal angiosperms.</title>
        <authorList>
            <person name="Moore M.J."/>
            <person name="Bell C.D."/>
            <person name="Soltis P.S."/>
            <person name="Soltis D.E."/>
        </authorList>
    </citation>
    <scope>NUCLEOTIDE SEQUENCE [LARGE SCALE GENOMIC DNA]</scope>
</reference>
<proteinExistence type="inferred from homology"/>
<gene>
    <name evidence="2" type="primary">psbD</name>
</gene>
<sequence>MTIALGRFTKEEKDLFDIMDDWLRRDRFVFVGWSGLLLFPCAYFALGGWFTGTTFVTSWYTHGLASSYLEGCNFLTAAVSTPANSLAHSLLLLWGPEAQGDFTRWCQLGGLWTFVALHGAFGLIGFMLRQFELARSVQLRPYNAIAFSAPIAVFVSVFLIYPLGQSGWFFAPSFGVAAIFRFILFFQGFHNWTLNPFHMMGVAGVLGAALLCAIHGATVENTLFEDGDGANTFRAFNPTQAEETYSMVTANRFWSQIFGVAFSNKRWLHFFMLFVPVTGLWMSALGVVGLALNLRAYDFVSQEIRAAEDPEFETFYTKNLLLNEGIRAWMAAQDQPHENLIFPEEVLPRGNAL</sequence>
<keyword id="KW-0007">Acetylation</keyword>
<keyword id="KW-0148">Chlorophyll</keyword>
<keyword id="KW-0150">Chloroplast</keyword>
<keyword id="KW-0157">Chromophore</keyword>
<keyword id="KW-0249">Electron transport</keyword>
<keyword id="KW-0408">Iron</keyword>
<keyword id="KW-0460">Magnesium</keyword>
<keyword id="KW-0472">Membrane</keyword>
<keyword id="KW-0479">Metal-binding</keyword>
<keyword id="KW-0560">Oxidoreductase</keyword>
<keyword id="KW-0597">Phosphoprotein</keyword>
<keyword id="KW-0602">Photosynthesis</keyword>
<keyword id="KW-0604">Photosystem II</keyword>
<keyword id="KW-0934">Plastid</keyword>
<keyword id="KW-0793">Thylakoid</keyword>
<keyword id="KW-0812">Transmembrane</keyword>
<keyword id="KW-1133">Transmembrane helix</keyword>
<keyword id="KW-0813">Transport</keyword>
<organism>
    <name type="scientific">Ceratophyllum demersum</name>
    <name type="common">Rigid hornwort</name>
    <name type="synonym">Coontail</name>
    <dbReference type="NCBI Taxonomy" id="4428"/>
    <lineage>
        <taxon>Eukaryota</taxon>
        <taxon>Viridiplantae</taxon>
        <taxon>Streptophyta</taxon>
        <taxon>Embryophyta</taxon>
        <taxon>Tracheophyta</taxon>
        <taxon>Spermatophyta</taxon>
        <taxon>Magnoliopsida</taxon>
        <taxon>Ceratophyllales</taxon>
        <taxon>Ceratophyllaceae</taxon>
        <taxon>Ceratophyllum</taxon>
    </lineage>
</organism>
<feature type="initiator methionine" description="Removed" evidence="1">
    <location>
        <position position="1"/>
    </location>
</feature>
<feature type="chain" id="PRO_0000359630" description="Photosystem II D2 protein">
    <location>
        <begin position="2"/>
        <end position="353"/>
    </location>
</feature>
<feature type="transmembrane region" description="Helical" evidence="2">
    <location>
        <begin position="41"/>
        <end position="61"/>
    </location>
</feature>
<feature type="transmembrane region" description="Helical" evidence="2">
    <location>
        <begin position="125"/>
        <end position="141"/>
    </location>
</feature>
<feature type="transmembrane region" description="Helical" evidence="2">
    <location>
        <begin position="153"/>
        <end position="166"/>
    </location>
</feature>
<feature type="transmembrane region" description="Helical" evidence="2">
    <location>
        <begin position="208"/>
        <end position="228"/>
    </location>
</feature>
<feature type="transmembrane region" description="Helical" evidence="2">
    <location>
        <begin position="279"/>
        <end position="295"/>
    </location>
</feature>
<feature type="binding site" description="axial binding residue" evidence="2">
    <location>
        <position position="118"/>
    </location>
    <ligand>
        <name>chlorophyll a</name>
        <dbReference type="ChEBI" id="CHEBI:58416"/>
        <label>ChlzD2</label>
    </ligand>
    <ligandPart>
        <name>Mg</name>
        <dbReference type="ChEBI" id="CHEBI:25107"/>
    </ligandPart>
</feature>
<feature type="binding site" evidence="2">
    <location>
        <position position="130"/>
    </location>
    <ligand>
        <name>pheophytin a</name>
        <dbReference type="ChEBI" id="CHEBI:136840"/>
        <label>D2</label>
    </ligand>
</feature>
<feature type="binding site" evidence="2">
    <location>
        <position position="143"/>
    </location>
    <ligand>
        <name>pheophytin a</name>
        <dbReference type="ChEBI" id="CHEBI:136840"/>
        <label>D2</label>
    </ligand>
</feature>
<feature type="binding site" description="axial binding residue" evidence="2">
    <location>
        <position position="198"/>
    </location>
    <ligand>
        <name>chlorophyll a</name>
        <dbReference type="ChEBI" id="CHEBI:58416"/>
        <label>PD2</label>
    </ligand>
    <ligandPart>
        <name>Mg</name>
        <dbReference type="ChEBI" id="CHEBI:25107"/>
    </ligandPart>
</feature>
<feature type="binding site" evidence="2">
    <location>
        <position position="215"/>
    </location>
    <ligand>
        <name>a plastoquinone</name>
        <dbReference type="ChEBI" id="CHEBI:17757"/>
        <label>Q(A)</label>
    </ligand>
</feature>
<feature type="binding site" evidence="2">
    <location>
        <position position="215"/>
    </location>
    <ligand>
        <name>Fe cation</name>
        <dbReference type="ChEBI" id="CHEBI:24875"/>
        <note>ligand shared with heterodimeric partner</note>
    </ligand>
</feature>
<feature type="binding site" evidence="2">
    <location>
        <position position="262"/>
    </location>
    <ligand>
        <name>a plastoquinone</name>
        <dbReference type="ChEBI" id="CHEBI:17757"/>
        <label>Q(A)</label>
    </ligand>
</feature>
<feature type="binding site" evidence="2">
    <location>
        <position position="269"/>
    </location>
    <ligand>
        <name>Fe cation</name>
        <dbReference type="ChEBI" id="CHEBI:24875"/>
        <note>ligand shared with heterodimeric partner</note>
    </ligand>
</feature>
<feature type="modified residue" description="N-acetylthreonine" evidence="1">
    <location>
        <position position="2"/>
    </location>
</feature>
<feature type="modified residue" description="Phosphothreonine" evidence="1">
    <location>
        <position position="2"/>
    </location>
</feature>
<evidence type="ECO:0000250" key="1">
    <source>
        <dbReference type="UniProtKB" id="P56761"/>
    </source>
</evidence>
<evidence type="ECO:0000255" key="2">
    <source>
        <dbReference type="HAMAP-Rule" id="MF_01383"/>
    </source>
</evidence>
<protein>
    <recommendedName>
        <fullName evidence="2">Photosystem II D2 protein</fullName>
        <shortName evidence="2">PSII D2 protein</shortName>
        <ecNumber evidence="2">1.10.3.9</ecNumber>
    </recommendedName>
    <alternativeName>
        <fullName evidence="2">Photosystem Q(A) protein</fullName>
    </alternativeName>
</protein>